<reference key="1">
    <citation type="journal article" date="2001" name="Nature">
        <title>Complete genome sequence of a multiple drug resistant Salmonella enterica serovar Typhi CT18.</title>
        <authorList>
            <person name="Parkhill J."/>
            <person name="Dougan G."/>
            <person name="James K.D."/>
            <person name="Thomson N.R."/>
            <person name="Pickard D."/>
            <person name="Wain J."/>
            <person name="Churcher C.M."/>
            <person name="Mungall K.L."/>
            <person name="Bentley S.D."/>
            <person name="Holden M.T.G."/>
            <person name="Sebaihia M."/>
            <person name="Baker S."/>
            <person name="Basham D."/>
            <person name="Brooks K."/>
            <person name="Chillingworth T."/>
            <person name="Connerton P."/>
            <person name="Cronin A."/>
            <person name="Davis P."/>
            <person name="Davies R.M."/>
            <person name="Dowd L."/>
            <person name="White N."/>
            <person name="Farrar J."/>
            <person name="Feltwell T."/>
            <person name="Hamlin N."/>
            <person name="Haque A."/>
            <person name="Hien T.T."/>
            <person name="Holroyd S."/>
            <person name="Jagels K."/>
            <person name="Krogh A."/>
            <person name="Larsen T.S."/>
            <person name="Leather S."/>
            <person name="Moule S."/>
            <person name="O'Gaora P."/>
            <person name="Parry C."/>
            <person name="Quail M.A."/>
            <person name="Rutherford K.M."/>
            <person name="Simmonds M."/>
            <person name="Skelton J."/>
            <person name="Stevens K."/>
            <person name="Whitehead S."/>
            <person name="Barrell B.G."/>
        </authorList>
    </citation>
    <scope>NUCLEOTIDE SEQUENCE [LARGE SCALE GENOMIC DNA]</scope>
    <source>
        <strain>CT18</strain>
    </source>
</reference>
<reference key="2">
    <citation type="journal article" date="2003" name="J. Bacteriol.">
        <title>Comparative genomics of Salmonella enterica serovar Typhi strains Ty2 and CT18.</title>
        <authorList>
            <person name="Deng W."/>
            <person name="Liou S.-R."/>
            <person name="Plunkett G. III"/>
            <person name="Mayhew G.F."/>
            <person name="Rose D.J."/>
            <person name="Burland V."/>
            <person name="Kodoyianni V."/>
            <person name="Schwartz D.C."/>
            <person name="Blattner F.R."/>
        </authorList>
    </citation>
    <scope>NUCLEOTIDE SEQUENCE [LARGE SCALE GENOMIC DNA]</scope>
    <source>
        <strain>ATCC 700931 / Ty2</strain>
    </source>
</reference>
<organism>
    <name type="scientific">Salmonella typhi</name>
    <dbReference type="NCBI Taxonomy" id="90370"/>
    <lineage>
        <taxon>Bacteria</taxon>
        <taxon>Pseudomonadati</taxon>
        <taxon>Pseudomonadota</taxon>
        <taxon>Gammaproteobacteria</taxon>
        <taxon>Enterobacterales</taxon>
        <taxon>Enterobacteriaceae</taxon>
        <taxon>Salmonella</taxon>
    </lineage>
</organism>
<name>MAO1_SALTI</name>
<keyword id="KW-0479">Metal-binding</keyword>
<keyword id="KW-0520">NAD</keyword>
<keyword id="KW-0560">Oxidoreductase</keyword>
<sequence>METTTKKARSLYIPYAGPVLLEFPLLNKGSAFSVEERRNFNLSGLLPEVVESIEEQAERAWLQYQGFKTEIDKHIYLRNIQDTNETLFYRLVQNHLEEMMPVIYTPTVGAACERFSEIYRRARGVFISYPNRHNMDDILQNVPNHNIKVIVVTDGERILGLGDQGIGGMGIPIGKLSLYTACGGISPAYTLPVVLDVGTNNQQLLNDPLYMGWRHPRITDDEYYAFVDEFIQAVKQRWPDILLQFEDFAQKNAMPLLTRYRDEICSFNDDIQGTAAVTVGTLIAASRAAGSQLSEQKIVFLGAGSAGCGIAEQIIAQTQREGLSEDAARQNVFMVDRFGLLTDRMPNLLPFQAKLVQKCDNLQHWDTENDVLSLLDVVRNVKPDILIGVSGQTGLFTEEIIREMHKHCPRPIVMPLSNPTSRVEATPQDIIAWTEGNALVATGSPFSPVIWKDKVYPIAQCNNAYIFPGIGLGVIASGASRITDEMLMSASETLAKHSPLVNNGEGLVLPALKDIQVVSRAIAFAVGKMAQQQGVAVKTSAEALQQAIDDNFWKPEYRDYRRTSI</sequence>
<evidence type="ECO:0000255" key="1">
    <source>
        <dbReference type="HAMAP-Rule" id="MF_01619"/>
    </source>
</evidence>
<evidence type="ECO:0000305" key="2"/>
<proteinExistence type="inferred from homology"/>
<protein>
    <recommendedName>
        <fullName evidence="1">NAD-dependent malic enzyme</fullName>
        <shortName evidence="1">NAD-ME</shortName>
        <ecNumber evidence="1">1.1.1.38</ecNumber>
    </recommendedName>
</protein>
<dbReference type="EC" id="1.1.1.38" evidence="1"/>
<dbReference type="EMBL" id="AL513382">
    <property type="protein sequence ID" value="CAD01754.1"/>
    <property type="status" value="ALT_INIT"/>
    <property type="molecule type" value="Genomic_DNA"/>
</dbReference>
<dbReference type="EMBL" id="AE014613">
    <property type="protein sequence ID" value="AAO69119.1"/>
    <property type="status" value="ALT_INIT"/>
    <property type="molecule type" value="Genomic_DNA"/>
</dbReference>
<dbReference type="RefSeq" id="NP_455924.3">
    <property type="nucleotide sequence ID" value="NC_003198.1"/>
</dbReference>
<dbReference type="RefSeq" id="WP_000450511.1">
    <property type="nucleotide sequence ID" value="NZ_WSUR01000006.1"/>
</dbReference>
<dbReference type="SMR" id="Q8Z728"/>
<dbReference type="STRING" id="220341.gene:17585444"/>
<dbReference type="KEGG" id="stt:t1481"/>
<dbReference type="KEGG" id="sty:STY1494"/>
<dbReference type="PATRIC" id="fig|220341.7.peg.1504"/>
<dbReference type="eggNOG" id="COG0281">
    <property type="taxonomic scope" value="Bacteria"/>
</dbReference>
<dbReference type="HOGENOM" id="CLU_011405_5_2_6"/>
<dbReference type="OMA" id="QIVNHMV"/>
<dbReference type="OrthoDB" id="3314528at2"/>
<dbReference type="Proteomes" id="UP000000541">
    <property type="component" value="Chromosome"/>
</dbReference>
<dbReference type="Proteomes" id="UP000002670">
    <property type="component" value="Chromosome"/>
</dbReference>
<dbReference type="GO" id="GO:0005829">
    <property type="term" value="C:cytosol"/>
    <property type="evidence" value="ECO:0007669"/>
    <property type="project" value="TreeGrafter"/>
</dbReference>
<dbReference type="GO" id="GO:0004471">
    <property type="term" value="F:malate dehydrogenase (decarboxylating) (NAD+) activity"/>
    <property type="evidence" value="ECO:0007669"/>
    <property type="project" value="UniProtKB-UniRule"/>
</dbReference>
<dbReference type="GO" id="GO:0046872">
    <property type="term" value="F:metal ion binding"/>
    <property type="evidence" value="ECO:0007669"/>
    <property type="project" value="UniProtKB-KW"/>
</dbReference>
<dbReference type="GO" id="GO:0051287">
    <property type="term" value="F:NAD binding"/>
    <property type="evidence" value="ECO:0007669"/>
    <property type="project" value="InterPro"/>
</dbReference>
<dbReference type="GO" id="GO:0008948">
    <property type="term" value="F:oxaloacetate decarboxylase activity"/>
    <property type="evidence" value="ECO:0007669"/>
    <property type="project" value="UniProtKB-UniRule"/>
</dbReference>
<dbReference type="GO" id="GO:0006108">
    <property type="term" value="P:malate metabolic process"/>
    <property type="evidence" value="ECO:0007669"/>
    <property type="project" value="TreeGrafter"/>
</dbReference>
<dbReference type="CDD" id="cd05312">
    <property type="entry name" value="NAD_bind_1_malic_enz"/>
    <property type="match status" value="1"/>
</dbReference>
<dbReference type="FunFam" id="3.40.50.10380:FF:000001">
    <property type="entry name" value="NAD-dependent malic enzyme"/>
    <property type="match status" value="1"/>
</dbReference>
<dbReference type="FunFam" id="3.40.50.720:FF:000055">
    <property type="entry name" value="NAD-dependent malic enzyme"/>
    <property type="match status" value="1"/>
</dbReference>
<dbReference type="Gene3D" id="3.40.50.10380">
    <property type="entry name" value="Malic enzyme, N-terminal domain"/>
    <property type="match status" value="1"/>
</dbReference>
<dbReference type="Gene3D" id="3.40.50.720">
    <property type="entry name" value="NAD(P)-binding Rossmann-like Domain"/>
    <property type="match status" value="1"/>
</dbReference>
<dbReference type="HAMAP" id="MF_01619">
    <property type="entry name" value="NAD_malic_enz"/>
    <property type="match status" value="1"/>
</dbReference>
<dbReference type="InterPro" id="IPR046346">
    <property type="entry name" value="Aminoacid_DH-like_N_sf"/>
</dbReference>
<dbReference type="InterPro" id="IPR015884">
    <property type="entry name" value="Malic_enzyme_CS"/>
</dbReference>
<dbReference type="InterPro" id="IPR012301">
    <property type="entry name" value="Malic_N_dom"/>
</dbReference>
<dbReference type="InterPro" id="IPR037062">
    <property type="entry name" value="Malic_N_dom_sf"/>
</dbReference>
<dbReference type="InterPro" id="IPR012302">
    <property type="entry name" value="Malic_NAD-bd"/>
</dbReference>
<dbReference type="InterPro" id="IPR001891">
    <property type="entry name" value="Malic_OxRdtase"/>
</dbReference>
<dbReference type="InterPro" id="IPR036291">
    <property type="entry name" value="NAD(P)-bd_dom_sf"/>
</dbReference>
<dbReference type="InterPro" id="IPR023667">
    <property type="entry name" value="NAD_malic_enz_proteobac"/>
</dbReference>
<dbReference type="NCBIfam" id="NF010052">
    <property type="entry name" value="PRK13529.1"/>
    <property type="match status" value="1"/>
</dbReference>
<dbReference type="PANTHER" id="PTHR23406">
    <property type="entry name" value="MALIC ENZYME-RELATED"/>
    <property type="match status" value="1"/>
</dbReference>
<dbReference type="PANTHER" id="PTHR23406:SF34">
    <property type="entry name" value="NAD-DEPENDENT MALIC ENZYME, MITOCHONDRIAL"/>
    <property type="match status" value="1"/>
</dbReference>
<dbReference type="Pfam" id="PF00390">
    <property type="entry name" value="malic"/>
    <property type="match status" value="1"/>
</dbReference>
<dbReference type="Pfam" id="PF03949">
    <property type="entry name" value="Malic_M"/>
    <property type="match status" value="1"/>
</dbReference>
<dbReference type="PIRSF" id="PIRSF000106">
    <property type="entry name" value="ME"/>
    <property type="match status" value="1"/>
</dbReference>
<dbReference type="PRINTS" id="PR00072">
    <property type="entry name" value="MALOXRDTASE"/>
</dbReference>
<dbReference type="SMART" id="SM01274">
    <property type="entry name" value="malic"/>
    <property type="match status" value="1"/>
</dbReference>
<dbReference type="SMART" id="SM00919">
    <property type="entry name" value="Malic_M"/>
    <property type="match status" value="1"/>
</dbReference>
<dbReference type="SUPFAM" id="SSF53223">
    <property type="entry name" value="Aminoacid dehydrogenase-like, N-terminal domain"/>
    <property type="match status" value="1"/>
</dbReference>
<dbReference type="SUPFAM" id="SSF51735">
    <property type="entry name" value="NAD(P)-binding Rossmann-fold domains"/>
    <property type="match status" value="1"/>
</dbReference>
<dbReference type="PROSITE" id="PS00331">
    <property type="entry name" value="MALIC_ENZYMES"/>
    <property type="match status" value="1"/>
</dbReference>
<comment type="catalytic activity">
    <reaction evidence="1">
        <text>(S)-malate + NAD(+) = pyruvate + CO2 + NADH</text>
        <dbReference type="Rhea" id="RHEA:12653"/>
        <dbReference type="ChEBI" id="CHEBI:15361"/>
        <dbReference type="ChEBI" id="CHEBI:15589"/>
        <dbReference type="ChEBI" id="CHEBI:16526"/>
        <dbReference type="ChEBI" id="CHEBI:57540"/>
        <dbReference type="ChEBI" id="CHEBI:57945"/>
        <dbReference type="EC" id="1.1.1.38"/>
    </reaction>
</comment>
<comment type="catalytic activity">
    <reaction evidence="1">
        <text>oxaloacetate + H(+) = pyruvate + CO2</text>
        <dbReference type="Rhea" id="RHEA:15641"/>
        <dbReference type="ChEBI" id="CHEBI:15361"/>
        <dbReference type="ChEBI" id="CHEBI:15378"/>
        <dbReference type="ChEBI" id="CHEBI:16452"/>
        <dbReference type="ChEBI" id="CHEBI:16526"/>
        <dbReference type="EC" id="1.1.1.38"/>
    </reaction>
</comment>
<comment type="cofactor">
    <cofactor evidence="1">
        <name>Mg(2+)</name>
        <dbReference type="ChEBI" id="CHEBI:18420"/>
    </cofactor>
    <cofactor evidence="1">
        <name>Mn(2+)</name>
        <dbReference type="ChEBI" id="CHEBI:29035"/>
    </cofactor>
    <text evidence="1">Divalent metal cations. Prefers magnesium or manganese.</text>
</comment>
<comment type="subunit">
    <text evidence="1">Homotetramer.</text>
</comment>
<comment type="similarity">
    <text evidence="1">Belongs to the malic enzymes family.</text>
</comment>
<comment type="sequence caution" evidence="2">
    <conflict type="erroneous initiation">
        <sequence resource="EMBL-CDS" id="AAO69119"/>
    </conflict>
</comment>
<comment type="sequence caution" evidence="2">
    <conflict type="erroneous initiation">
        <sequence resource="EMBL-CDS" id="CAD01754"/>
    </conflict>
</comment>
<accession>Q8Z728</accession>
<accession>Q7C9R6</accession>
<gene>
    <name evidence="1" type="primary">maeA</name>
    <name type="ordered locus">STY1494</name>
    <name type="ordered locus">t1481</name>
</gene>
<feature type="chain" id="PRO_0000160230" description="NAD-dependent malic enzyme">
    <location>
        <begin position="1"/>
        <end position="565"/>
    </location>
</feature>
<feature type="active site" description="Proton donor" evidence="1">
    <location>
        <position position="104"/>
    </location>
</feature>
<feature type="active site" description="Proton acceptor" evidence="1">
    <location>
        <position position="175"/>
    </location>
</feature>
<feature type="binding site" evidence="1">
    <location>
        <position position="157"/>
    </location>
    <ligand>
        <name>NAD(+)</name>
        <dbReference type="ChEBI" id="CHEBI:57540"/>
    </ligand>
</feature>
<feature type="binding site" evidence="1">
    <location>
        <position position="246"/>
    </location>
    <ligand>
        <name>a divalent metal cation</name>
        <dbReference type="ChEBI" id="CHEBI:60240"/>
    </ligand>
</feature>
<feature type="binding site" evidence="1">
    <location>
        <position position="247"/>
    </location>
    <ligand>
        <name>a divalent metal cation</name>
        <dbReference type="ChEBI" id="CHEBI:60240"/>
    </ligand>
</feature>
<feature type="binding site" evidence="1">
    <location>
        <position position="270"/>
    </location>
    <ligand>
        <name>a divalent metal cation</name>
        <dbReference type="ChEBI" id="CHEBI:60240"/>
    </ligand>
</feature>
<feature type="binding site" evidence="1">
    <location>
        <position position="270"/>
    </location>
    <ligand>
        <name>NAD(+)</name>
        <dbReference type="ChEBI" id="CHEBI:57540"/>
    </ligand>
</feature>
<feature type="binding site" evidence="1">
    <location>
        <position position="418"/>
    </location>
    <ligand>
        <name>NAD(+)</name>
        <dbReference type="ChEBI" id="CHEBI:57540"/>
    </ligand>
</feature>
<feature type="site" description="Important for activity" evidence="1">
    <location>
        <position position="270"/>
    </location>
</feature>